<accession>Q74HZ5</accession>
<proteinExistence type="inferred from homology"/>
<organism>
    <name type="scientific">Lactobacillus johnsonii (strain CNCM I-12250 / La1 / NCC 533)</name>
    <dbReference type="NCBI Taxonomy" id="257314"/>
    <lineage>
        <taxon>Bacteria</taxon>
        <taxon>Bacillati</taxon>
        <taxon>Bacillota</taxon>
        <taxon>Bacilli</taxon>
        <taxon>Lactobacillales</taxon>
        <taxon>Lactobacillaceae</taxon>
        <taxon>Lactobacillus</taxon>
    </lineage>
</organism>
<keyword id="KW-0030">Aminoacyl-tRNA synthetase</keyword>
<keyword id="KW-0067">ATP-binding</keyword>
<keyword id="KW-0963">Cytoplasm</keyword>
<keyword id="KW-0436">Ligase</keyword>
<keyword id="KW-0547">Nucleotide-binding</keyword>
<keyword id="KW-0648">Protein biosynthesis</keyword>
<name>SYS_LACJO</name>
<dbReference type="EC" id="6.1.1.11" evidence="1"/>
<dbReference type="EMBL" id="AE017198">
    <property type="protein sequence ID" value="AAS09545.1"/>
    <property type="molecule type" value="Genomic_DNA"/>
</dbReference>
<dbReference type="RefSeq" id="WP_004896642.1">
    <property type="nucleotide sequence ID" value="NC_005362.1"/>
</dbReference>
<dbReference type="SMR" id="Q74HZ5"/>
<dbReference type="GeneID" id="83571015"/>
<dbReference type="KEGG" id="ljo:LJ_0676"/>
<dbReference type="eggNOG" id="COG0172">
    <property type="taxonomic scope" value="Bacteria"/>
</dbReference>
<dbReference type="HOGENOM" id="CLU_023797_1_1_9"/>
<dbReference type="UniPathway" id="UPA00906">
    <property type="reaction ID" value="UER00895"/>
</dbReference>
<dbReference type="Proteomes" id="UP000000581">
    <property type="component" value="Chromosome"/>
</dbReference>
<dbReference type="GO" id="GO:0005737">
    <property type="term" value="C:cytoplasm"/>
    <property type="evidence" value="ECO:0007669"/>
    <property type="project" value="UniProtKB-SubCell"/>
</dbReference>
<dbReference type="GO" id="GO:0005524">
    <property type="term" value="F:ATP binding"/>
    <property type="evidence" value="ECO:0007669"/>
    <property type="project" value="UniProtKB-UniRule"/>
</dbReference>
<dbReference type="GO" id="GO:0140096">
    <property type="term" value="F:catalytic activity, acting on a protein"/>
    <property type="evidence" value="ECO:0007669"/>
    <property type="project" value="UniProtKB-ARBA"/>
</dbReference>
<dbReference type="GO" id="GO:0004828">
    <property type="term" value="F:serine-tRNA ligase activity"/>
    <property type="evidence" value="ECO:0007669"/>
    <property type="project" value="UniProtKB-UniRule"/>
</dbReference>
<dbReference type="GO" id="GO:0016740">
    <property type="term" value="F:transferase activity"/>
    <property type="evidence" value="ECO:0007669"/>
    <property type="project" value="UniProtKB-ARBA"/>
</dbReference>
<dbReference type="GO" id="GO:0016260">
    <property type="term" value="P:selenocysteine biosynthetic process"/>
    <property type="evidence" value="ECO:0007669"/>
    <property type="project" value="UniProtKB-UniRule"/>
</dbReference>
<dbReference type="GO" id="GO:0006434">
    <property type="term" value="P:seryl-tRNA aminoacylation"/>
    <property type="evidence" value="ECO:0007669"/>
    <property type="project" value="UniProtKB-UniRule"/>
</dbReference>
<dbReference type="CDD" id="cd00770">
    <property type="entry name" value="SerRS_core"/>
    <property type="match status" value="1"/>
</dbReference>
<dbReference type="Gene3D" id="3.30.930.10">
    <property type="entry name" value="Bira Bifunctional Protein, Domain 2"/>
    <property type="match status" value="1"/>
</dbReference>
<dbReference type="Gene3D" id="1.10.287.40">
    <property type="entry name" value="Serine-tRNA synthetase, tRNA binding domain"/>
    <property type="match status" value="1"/>
</dbReference>
<dbReference type="HAMAP" id="MF_00176">
    <property type="entry name" value="Ser_tRNA_synth_type1"/>
    <property type="match status" value="1"/>
</dbReference>
<dbReference type="InterPro" id="IPR002314">
    <property type="entry name" value="aa-tRNA-synt_IIb"/>
</dbReference>
<dbReference type="InterPro" id="IPR006195">
    <property type="entry name" value="aa-tRNA-synth_II"/>
</dbReference>
<dbReference type="InterPro" id="IPR045864">
    <property type="entry name" value="aa-tRNA-synth_II/BPL/LPL"/>
</dbReference>
<dbReference type="InterPro" id="IPR002317">
    <property type="entry name" value="Ser-tRNA-ligase_type_1"/>
</dbReference>
<dbReference type="InterPro" id="IPR015866">
    <property type="entry name" value="Ser-tRNA-synth_1_N"/>
</dbReference>
<dbReference type="InterPro" id="IPR042103">
    <property type="entry name" value="SerRS_1_N_sf"/>
</dbReference>
<dbReference type="InterPro" id="IPR033729">
    <property type="entry name" value="SerRS_core"/>
</dbReference>
<dbReference type="InterPro" id="IPR010978">
    <property type="entry name" value="tRNA-bd_arm"/>
</dbReference>
<dbReference type="NCBIfam" id="TIGR00414">
    <property type="entry name" value="serS"/>
    <property type="match status" value="1"/>
</dbReference>
<dbReference type="PANTHER" id="PTHR43697:SF1">
    <property type="entry name" value="SERINE--TRNA LIGASE"/>
    <property type="match status" value="1"/>
</dbReference>
<dbReference type="PANTHER" id="PTHR43697">
    <property type="entry name" value="SERYL-TRNA SYNTHETASE"/>
    <property type="match status" value="1"/>
</dbReference>
<dbReference type="Pfam" id="PF02403">
    <property type="entry name" value="Seryl_tRNA_N"/>
    <property type="match status" value="1"/>
</dbReference>
<dbReference type="Pfam" id="PF00587">
    <property type="entry name" value="tRNA-synt_2b"/>
    <property type="match status" value="1"/>
</dbReference>
<dbReference type="PIRSF" id="PIRSF001529">
    <property type="entry name" value="Ser-tRNA-synth_IIa"/>
    <property type="match status" value="1"/>
</dbReference>
<dbReference type="PRINTS" id="PR00981">
    <property type="entry name" value="TRNASYNTHSER"/>
</dbReference>
<dbReference type="SUPFAM" id="SSF55681">
    <property type="entry name" value="Class II aaRS and biotin synthetases"/>
    <property type="match status" value="1"/>
</dbReference>
<dbReference type="SUPFAM" id="SSF46589">
    <property type="entry name" value="tRNA-binding arm"/>
    <property type="match status" value="1"/>
</dbReference>
<dbReference type="PROSITE" id="PS50862">
    <property type="entry name" value="AA_TRNA_LIGASE_II"/>
    <property type="match status" value="1"/>
</dbReference>
<sequence>MLDIKVIRENLDWSKKKLATRGIKPEELDKLVAIDKERREALTKSEQLKQKRNEVSDQIAQAKRNKEDASDAIKAMREVGKEIKDLDKEVEDLTQKQNYILLRLPNFPADSDPIGPDESYNEEVRKWHEPTKLDFEPKPHWEIGTELNILDWDTAAKVSGARFVYYKGAGALLERAVSNFFLDENTKDGYTEVIPPYLVNDASMQGTGQFPKFTEDVYTIVDNDDPDKPRDLTLIPTAEVPLVNYFRGKILDGEQLPINVTAFSPAFRSEAGSAGRDTRGLIRMHEFRKVEMVKIVDEESSWDELEKLTHNAEHLLQKLGLPYHVVALSTGDASFTSAKTYDLEVWMPAQDKYREISSCSNCTDFQARRSLIRYRDENGKLHLAHTLNGSGLAVGRTVAAILENYQNEDGTVNVPEALQPYMHGMKVITKEPKFGE</sequence>
<evidence type="ECO:0000255" key="1">
    <source>
        <dbReference type="HAMAP-Rule" id="MF_00176"/>
    </source>
</evidence>
<evidence type="ECO:0000256" key="2">
    <source>
        <dbReference type="SAM" id="MobiDB-lite"/>
    </source>
</evidence>
<feature type="chain" id="PRO_0000122063" description="Serine--tRNA ligase">
    <location>
        <begin position="1"/>
        <end position="436"/>
    </location>
</feature>
<feature type="region of interest" description="Disordered" evidence="2">
    <location>
        <begin position="43"/>
        <end position="68"/>
    </location>
</feature>
<feature type="compositionally biased region" description="Basic and acidic residues" evidence="2">
    <location>
        <begin position="43"/>
        <end position="55"/>
    </location>
</feature>
<feature type="binding site" evidence="1">
    <location>
        <begin position="237"/>
        <end position="239"/>
    </location>
    <ligand>
        <name>L-serine</name>
        <dbReference type="ChEBI" id="CHEBI:33384"/>
    </ligand>
</feature>
<feature type="binding site" evidence="1">
    <location>
        <begin position="268"/>
        <end position="270"/>
    </location>
    <ligand>
        <name>ATP</name>
        <dbReference type="ChEBI" id="CHEBI:30616"/>
    </ligand>
</feature>
<feature type="binding site" evidence="1">
    <location>
        <position position="291"/>
    </location>
    <ligand>
        <name>L-serine</name>
        <dbReference type="ChEBI" id="CHEBI:33384"/>
    </ligand>
</feature>
<feature type="binding site" evidence="1">
    <location>
        <begin position="355"/>
        <end position="358"/>
    </location>
    <ligand>
        <name>ATP</name>
        <dbReference type="ChEBI" id="CHEBI:30616"/>
    </ligand>
</feature>
<feature type="binding site" evidence="1">
    <location>
        <position position="390"/>
    </location>
    <ligand>
        <name>L-serine</name>
        <dbReference type="ChEBI" id="CHEBI:33384"/>
    </ligand>
</feature>
<comment type="function">
    <text evidence="1">Catalyzes the attachment of serine to tRNA(Ser). Is also able to aminoacylate tRNA(Sec) with serine, to form the misacylated tRNA L-seryl-tRNA(Sec), which will be further converted into selenocysteinyl-tRNA(Sec).</text>
</comment>
<comment type="catalytic activity">
    <reaction evidence="1">
        <text>tRNA(Ser) + L-serine + ATP = L-seryl-tRNA(Ser) + AMP + diphosphate + H(+)</text>
        <dbReference type="Rhea" id="RHEA:12292"/>
        <dbReference type="Rhea" id="RHEA-COMP:9669"/>
        <dbReference type="Rhea" id="RHEA-COMP:9703"/>
        <dbReference type="ChEBI" id="CHEBI:15378"/>
        <dbReference type="ChEBI" id="CHEBI:30616"/>
        <dbReference type="ChEBI" id="CHEBI:33019"/>
        <dbReference type="ChEBI" id="CHEBI:33384"/>
        <dbReference type="ChEBI" id="CHEBI:78442"/>
        <dbReference type="ChEBI" id="CHEBI:78533"/>
        <dbReference type="ChEBI" id="CHEBI:456215"/>
        <dbReference type="EC" id="6.1.1.11"/>
    </reaction>
</comment>
<comment type="catalytic activity">
    <reaction evidence="1">
        <text>tRNA(Sec) + L-serine + ATP = L-seryl-tRNA(Sec) + AMP + diphosphate + H(+)</text>
        <dbReference type="Rhea" id="RHEA:42580"/>
        <dbReference type="Rhea" id="RHEA-COMP:9742"/>
        <dbReference type="Rhea" id="RHEA-COMP:10128"/>
        <dbReference type="ChEBI" id="CHEBI:15378"/>
        <dbReference type="ChEBI" id="CHEBI:30616"/>
        <dbReference type="ChEBI" id="CHEBI:33019"/>
        <dbReference type="ChEBI" id="CHEBI:33384"/>
        <dbReference type="ChEBI" id="CHEBI:78442"/>
        <dbReference type="ChEBI" id="CHEBI:78533"/>
        <dbReference type="ChEBI" id="CHEBI:456215"/>
        <dbReference type="EC" id="6.1.1.11"/>
    </reaction>
</comment>
<comment type="pathway">
    <text evidence="1">Aminoacyl-tRNA biosynthesis; selenocysteinyl-tRNA(Sec) biosynthesis; L-seryl-tRNA(Sec) from L-serine and tRNA(Sec): step 1/1.</text>
</comment>
<comment type="subunit">
    <text evidence="1">Homodimer. The tRNA molecule binds across the dimer.</text>
</comment>
<comment type="subcellular location">
    <subcellularLocation>
        <location evidence="1">Cytoplasm</location>
    </subcellularLocation>
</comment>
<comment type="domain">
    <text evidence="1">Consists of two distinct domains, a catalytic core and a N-terminal extension that is involved in tRNA binding.</text>
</comment>
<comment type="similarity">
    <text evidence="1">Belongs to the class-II aminoacyl-tRNA synthetase family. Type-1 seryl-tRNA synthetase subfamily.</text>
</comment>
<protein>
    <recommendedName>
        <fullName evidence="1">Serine--tRNA ligase</fullName>
        <ecNumber evidence="1">6.1.1.11</ecNumber>
    </recommendedName>
    <alternativeName>
        <fullName evidence="1">Seryl-tRNA synthetase</fullName>
        <shortName evidence="1">SerRS</shortName>
    </alternativeName>
    <alternativeName>
        <fullName evidence="1">Seryl-tRNA(Ser/Sec) synthetase</fullName>
    </alternativeName>
</protein>
<reference key="1">
    <citation type="journal article" date="2004" name="Proc. Natl. Acad. Sci. U.S.A.">
        <title>The genome sequence of the probiotic intestinal bacterium Lactobacillus johnsonii NCC 533.</title>
        <authorList>
            <person name="Pridmore R.D."/>
            <person name="Berger B."/>
            <person name="Desiere F."/>
            <person name="Vilanova D."/>
            <person name="Barretto C."/>
            <person name="Pittet A.-C."/>
            <person name="Zwahlen M.-C."/>
            <person name="Rouvet M."/>
            <person name="Altermann E."/>
            <person name="Barrangou R."/>
            <person name="Mollet B."/>
            <person name="Mercenier A."/>
            <person name="Klaenhammer T."/>
            <person name="Arigoni F."/>
            <person name="Schell M.A."/>
        </authorList>
    </citation>
    <scope>NUCLEOTIDE SEQUENCE [LARGE SCALE GENOMIC DNA]</scope>
    <source>
        <strain>CNCM I-1225 / La1 / NCC 533</strain>
    </source>
</reference>
<gene>
    <name evidence="1" type="primary">serS</name>
    <name type="ordered locus">LJ_0676</name>
</gene>